<name>COQ7_FRAT1</name>
<gene>
    <name evidence="1" type="primary">coq7</name>
    <name type="ordered locus">FTF0537</name>
</gene>
<accession>Q14IS8</accession>
<reference key="1">
    <citation type="journal article" date="2007" name="PLoS ONE">
        <title>Genome sequencing shows that European isolates of Francisella tularensis subspecies tularensis are almost identical to US laboratory strain Schu S4.</title>
        <authorList>
            <person name="Chaudhuri R.R."/>
            <person name="Ren C.-P."/>
            <person name="Desmond L."/>
            <person name="Vincent G.A."/>
            <person name="Silman N.J."/>
            <person name="Brehm J.K."/>
            <person name="Elmore M.J."/>
            <person name="Hudson M.J."/>
            <person name="Forsman M."/>
            <person name="Isherwood K.E."/>
            <person name="Gurycova D."/>
            <person name="Minton N.P."/>
            <person name="Titball R.W."/>
            <person name="Pallen M.J."/>
            <person name="Vipond R."/>
        </authorList>
    </citation>
    <scope>NUCLEOTIDE SEQUENCE [LARGE SCALE GENOMIC DNA]</scope>
    <source>
        <strain>FSC 198</strain>
    </source>
</reference>
<evidence type="ECO:0000255" key="1">
    <source>
        <dbReference type="HAMAP-Rule" id="MF_01658"/>
    </source>
</evidence>
<protein>
    <recommendedName>
        <fullName evidence="1">3-demethoxyubiquinol 3-hydroxylase</fullName>
        <shortName evidence="1">DMQ hydroxylase</shortName>
        <ecNumber evidence="1">1.14.99.60</ecNumber>
    </recommendedName>
    <alternativeName>
        <fullName evidence="1">2-nonaprenyl-3-methyl-6-methoxy-1,4-benzoquinol hydroxylase</fullName>
    </alternativeName>
</protein>
<dbReference type="EC" id="1.14.99.60" evidence="1"/>
<dbReference type="EMBL" id="AM286280">
    <property type="protein sequence ID" value="CAL08553.1"/>
    <property type="molecule type" value="Genomic_DNA"/>
</dbReference>
<dbReference type="RefSeq" id="WP_003018903.1">
    <property type="nucleotide sequence ID" value="NC_008245.1"/>
</dbReference>
<dbReference type="SMR" id="Q14IS8"/>
<dbReference type="KEGG" id="ftf:FTF0537"/>
<dbReference type="HOGENOM" id="CLU_088601_0_0_6"/>
<dbReference type="UniPathway" id="UPA00232"/>
<dbReference type="GO" id="GO:0005886">
    <property type="term" value="C:plasma membrane"/>
    <property type="evidence" value="ECO:0007669"/>
    <property type="project" value="UniProtKB-SubCell"/>
</dbReference>
<dbReference type="GO" id="GO:0008682">
    <property type="term" value="F:3-demethoxyubiquinol 3-hydroxylase activity"/>
    <property type="evidence" value="ECO:0007669"/>
    <property type="project" value="UniProtKB-EC"/>
</dbReference>
<dbReference type="GO" id="GO:0046872">
    <property type="term" value="F:metal ion binding"/>
    <property type="evidence" value="ECO:0007669"/>
    <property type="project" value="UniProtKB-KW"/>
</dbReference>
<dbReference type="GO" id="GO:0006744">
    <property type="term" value="P:ubiquinone biosynthetic process"/>
    <property type="evidence" value="ECO:0007669"/>
    <property type="project" value="UniProtKB-UniRule"/>
</dbReference>
<dbReference type="CDD" id="cd01042">
    <property type="entry name" value="DMQH"/>
    <property type="match status" value="1"/>
</dbReference>
<dbReference type="Gene3D" id="1.20.1260.10">
    <property type="match status" value="1"/>
</dbReference>
<dbReference type="HAMAP" id="MF_01658">
    <property type="entry name" value="COQ7"/>
    <property type="match status" value="1"/>
</dbReference>
<dbReference type="InterPro" id="IPR047809">
    <property type="entry name" value="COQ7_proteobact"/>
</dbReference>
<dbReference type="InterPro" id="IPR012347">
    <property type="entry name" value="Ferritin-like"/>
</dbReference>
<dbReference type="InterPro" id="IPR009078">
    <property type="entry name" value="Ferritin-like_SF"/>
</dbReference>
<dbReference type="InterPro" id="IPR011566">
    <property type="entry name" value="Ubq_synth_Coq7"/>
</dbReference>
<dbReference type="NCBIfam" id="NF033656">
    <property type="entry name" value="DMQ_monoox_COQ7"/>
    <property type="match status" value="1"/>
</dbReference>
<dbReference type="PANTHER" id="PTHR11237:SF4">
    <property type="entry name" value="5-DEMETHOXYUBIQUINONE HYDROXYLASE, MITOCHONDRIAL"/>
    <property type="match status" value="1"/>
</dbReference>
<dbReference type="PANTHER" id="PTHR11237">
    <property type="entry name" value="COENZYME Q10 BIOSYNTHESIS PROTEIN 7"/>
    <property type="match status" value="1"/>
</dbReference>
<dbReference type="Pfam" id="PF03232">
    <property type="entry name" value="COQ7"/>
    <property type="match status" value="1"/>
</dbReference>
<dbReference type="SUPFAM" id="SSF47240">
    <property type="entry name" value="Ferritin-like"/>
    <property type="match status" value="1"/>
</dbReference>
<sequence length="211" mass="23756">MRKLSFLDRVIEELDSYARFTKVPLNPSKKSPSSDTIDGKLSEIEKKHSAGLMRVDYTGEICAQGLYRGQASVAKSPQTKEHLYHAAAEEYDHLAWCGERLQELGARPSLLNPFWYWTSFGIGAVAGSISDSLSYGFVVETEKQVMKHLDSHLKSLPVNDNRSREILKQMYIDESEHAVEAEKAGGKKLPKTVKAIMKLQSKVMTTLAYRF</sequence>
<feature type="chain" id="PRO_0000338689" description="3-demethoxyubiquinol 3-hydroxylase">
    <location>
        <begin position="1"/>
        <end position="211"/>
    </location>
</feature>
<feature type="binding site" evidence="1">
    <location>
        <position position="60"/>
    </location>
    <ligand>
        <name>Fe cation</name>
        <dbReference type="ChEBI" id="CHEBI:24875"/>
        <label>1</label>
    </ligand>
</feature>
<feature type="binding site" evidence="1">
    <location>
        <position position="90"/>
    </location>
    <ligand>
        <name>Fe cation</name>
        <dbReference type="ChEBI" id="CHEBI:24875"/>
        <label>1</label>
    </ligand>
</feature>
<feature type="binding site" evidence="1">
    <location>
        <position position="90"/>
    </location>
    <ligand>
        <name>Fe cation</name>
        <dbReference type="ChEBI" id="CHEBI:24875"/>
        <label>2</label>
    </ligand>
</feature>
<feature type="binding site" evidence="1">
    <location>
        <position position="93"/>
    </location>
    <ligand>
        <name>Fe cation</name>
        <dbReference type="ChEBI" id="CHEBI:24875"/>
        <label>1</label>
    </ligand>
</feature>
<feature type="binding site" evidence="1">
    <location>
        <position position="142"/>
    </location>
    <ligand>
        <name>Fe cation</name>
        <dbReference type="ChEBI" id="CHEBI:24875"/>
        <label>2</label>
    </ligand>
</feature>
<feature type="binding site" evidence="1">
    <location>
        <position position="174"/>
    </location>
    <ligand>
        <name>Fe cation</name>
        <dbReference type="ChEBI" id="CHEBI:24875"/>
        <label>1</label>
    </ligand>
</feature>
<feature type="binding site" evidence="1">
    <location>
        <position position="174"/>
    </location>
    <ligand>
        <name>Fe cation</name>
        <dbReference type="ChEBI" id="CHEBI:24875"/>
        <label>2</label>
    </ligand>
</feature>
<feature type="binding site" evidence="1">
    <location>
        <position position="177"/>
    </location>
    <ligand>
        <name>Fe cation</name>
        <dbReference type="ChEBI" id="CHEBI:24875"/>
        <label>2</label>
    </ligand>
</feature>
<keyword id="KW-1003">Cell membrane</keyword>
<keyword id="KW-0408">Iron</keyword>
<keyword id="KW-0472">Membrane</keyword>
<keyword id="KW-0479">Metal-binding</keyword>
<keyword id="KW-0503">Monooxygenase</keyword>
<keyword id="KW-0560">Oxidoreductase</keyword>
<keyword id="KW-0831">Ubiquinone biosynthesis</keyword>
<organism>
    <name type="scientific">Francisella tularensis subsp. tularensis (strain FSC 198)</name>
    <dbReference type="NCBI Taxonomy" id="393115"/>
    <lineage>
        <taxon>Bacteria</taxon>
        <taxon>Pseudomonadati</taxon>
        <taxon>Pseudomonadota</taxon>
        <taxon>Gammaproteobacteria</taxon>
        <taxon>Thiotrichales</taxon>
        <taxon>Francisellaceae</taxon>
        <taxon>Francisella</taxon>
    </lineage>
</organism>
<comment type="function">
    <text evidence="1">Catalyzes the hydroxylation of 2-nonaprenyl-3-methyl-6-methoxy-1,4-benzoquinol during ubiquinone biosynthesis.</text>
</comment>
<comment type="catalytic activity">
    <reaction evidence="1">
        <text>a 5-methoxy-2-methyl-3-(all-trans-polyprenyl)benzene-1,4-diol + AH2 + O2 = a 3-demethylubiquinol + A + H2O</text>
        <dbReference type="Rhea" id="RHEA:50908"/>
        <dbReference type="Rhea" id="RHEA-COMP:10859"/>
        <dbReference type="Rhea" id="RHEA-COMP:10914"/>
        <dbReference type="ChEBI" id="CHEBI:13193"/>
        <dbReference type="ChEBI" id="CHEBI:15377"/>
        <dbReference type="ChEBI" id="CHEBI:15379"/>
        <dbReference type="ChEBI" id="CHEBI:17499"/>
        <dbReference type="ChEBI" id="CHEBI:84167"/>
        <dbReference type="ChEBI" id="CHEBI:84422"/>
        <dbReference type="EC" id="1.14.99.60"/>
    </reaction>
</comment>
<comment type="cofactor">
    <cofactor evidence="1">
        <name>Fe cation</name>
        <dbReference type="ChEBI" id="CHEBI:24875"/>
    </cofactor>
    <text evidence="1">Binds 2 iron ions per subunit.</text>
</comment>
<comment type="pathway">
    <text evidence="1">Cofactor biosynthesis; ubiquinone biosynthesis.</text>
</comment>
<comment type="subcellular location">
    <subcellularLocation>
        <location evidence="1">Cell membrane</location>
        <topology evidence="1">Peripheral membrane protein</topology>
    </subcellularLocation>
</comment>
<comment type="similarity">
    <text evidence="1">Belongs to the COQ7 family.</text>
</comment>
<proteinExistence type="inferred from homology"/>